<reference key="1">
    <citation type="journal article" date="2001" name="DNA Res.">
        <title>Complete genome sequence of an aerobic thermoacidophilic Crenarchaeon, Sulfolobus tokodaii strain7.</title>
        <authorList>
            <person name="Kawarabayasi Y."/>
            <person name="Hino Y."/>
            <person name="Horikawa H."/>
            <person name="Jin-no K."/>
            <person name="Takahashi M."/>
            <person name="Sekine M."/>
            <person name="Baba S."/>
            <person name="Ankai A."/>
            <person name="Kosugi H."/>
            <person name="Hosoyama A."/>
            <person name="Fukui S."/>
            <person name="Nagai Y."/>
            <person name="Nishijima K."/>
            <person name="Otsuka R."/>
            <person name="Nakazawa H."/>
            <person name="Takamiya M."/>
            <person name="Kato Y."/>
            <person name="Yoshizawa T."/>
            <person name="Tanaka T."/>
            <person name="Kudoh Y."/>
            <person name="Yamazaki J."/>
            <person name="Kushida N."/>
            <person name="Oguchi A."/>
            <person name="Aoki K."/>
            <person name="Masuda S."/>
            <person name="Yanagii M."/>
            <person name="Nishimura M."/>
            <person name="Yamagishi A."/>
            <person name="Oshima T."/>
            <person name="Kikuchi H."/>
        </authorList>
    </citation>
    <scope>NUCLEOTIDE SEQUENCE [LARGE SCALE GENOMIC DNA]</scope>
    <source>
        <strain>DSM 16993 / JCM 10545 / NBRC 100140 / 7</strain>
    </source>
</reference>
<keyword id="KW-0028">Amino-acid biosynthesis</keyword>
<keyword id="KW-0055">Arginine biosynthesis</keyword>
<keyword id="KW-0170">Cobalt</keyword>
<keyword id="KW-0963">Cytoplasm</keyword>
<keyword id="KW-0378">Hydrolase</keyword>
<keyword id="KW-0457">Lysine biosynthesis</keyword>
<keyword id="KW-0479">Metal-binding</keyword>
<keyword id="KW-1185">Reference proteome</keyword>
<keyword id="KW-0862">Zinc</keyword>
<protein>
    <recommendedName>
        <fullName evidence="1">[LysW]-lysine/[LysW]-ornithine hydrolase</fullName>
        <ecNumber evidence="1">3.5.1.130</ecNumber>
        <ecNumber evidence="1">3.5.1.132</ecNumber>
    </recommendedName>
</protein>
<name>LYSK_SULTO</name>
<organism>
    <name type="scientific">Sulfurisphaera tokodaii (strain DSM 16993 / JCM 10545 / NBRC 100140 / 7)</name>
    <name type="common">Sulfolobus tokodaii</name>
    <dbReference type="NCBI Taxonomy" id="273063"/>
    <lineage>
        <taxon>Archaea</taxon>
        <taxon>Thermoproteota</taxon>
        <taxon>Thermoprotei</taxon>
        <taxon>Sulfolobales</taxon>
        <taxon>Sulfolobaceae</taxon>
        <taxon>Sulfurisphaera</taxon>
    </lineage>
</organism>
<sequence length="346" mass="38908">MQLEKELSRRKIKELLLEILSIYTPSGEEERAKDFFEKVSKEFNLNLEISKSKSYFLGKGDILLASHIDTVPGFIQPKIEGEVIYGRGAVDAKGPLIAMLLATYILNEKGYKVQFAALADEEGKSKGARELANSGIRYNYIIIGEPSNTLDVIVEYRGVLHLDILCRGNSQHSSSSKENLIVDLSKKILEIYREPSNYENFSIVPTIIKSGDYINMTPSEGYLHLDIRYSIKNSKDEILALIHNEFKTCDIKIVEDIEPVKVDVNSNIVKAVMRGIIKQGYKPKLARKAGTSDMNILKNIAKEIVTYGPGNSTLEHTNNEKISIDEIFIALTTYINAIEELCLKKK</sequence>
<comment type="function">
    <text evidence="1">Catalyzes the release of L-lysine from [LysW]-gamma-L-lysine and the release of L-ornithine from [LysW]-L-ornithine.</text>
</comment>
<comment type="catalytic activity">
    <reaction evidence="1">
        <text>[amino-group carrier protein]-C-terminal-gamma-(L-lysyl)-L-glutamate + H2O = [amino-group carrier protein]-C-terminal-L-glutamate + L-lysine</text>
        <dbReference type="Rhea" id="RHEA:48684"/>
        <dbReference type="Rhea" id="RHEA-COMP:9693"/>
        <dbReference type="Rhea" id="RHEA-COMP:9715"/>
        <dbReference type="ChEBI" id="CHEBI:15377"/>
        <dbReference type="ChEBI" id="CHEBI:32551"/>
        <dbReference type="ChEBI" id="CHEBI:78525"/>
        <dbReference type="ChEBI" id="CHEBI:78526"/>
        <dbReference type="EC" id="3.5.1.130"/>
    </reaction>
</comment>
<comment type="catalytic activity">
    <reaction evidence="1">
        <text>[amino-group carrier protein]-C-terminal-gamma-(L-ornithyl)-L-glutamate + H2O = [amino-group carrier protein]-C-terminal-L-glutamate + L-ornithine</text>
        <dbReference type="Rhea" id="RHEA:52676"/>
        <dbReference type="Rhea" id="RHEA-COMP:9693"/>
        <dbReference type="Rhea" id="RHEA-COMP:13328"/>
        <dbReference type="ChEBI" id="CHEBI:15377"/>
        <dbReference type="ChEBI" id="CHEBI:46911"/>
        <dbReference type="ChEBI" id="CHEBI:78525"/>
        <dbReference type="ChEBI" id="CHEBI:136763"/>
        <dbReference type="EC" id="3.5.1.132"/>
    </reaction>
</comment>
<comment type="cofactor">
    <cofactor evidence="1">
        <name>Zn(2+)</name>
        <dbReference type="ChEBI" id="CHEBI:29105"/>
    </cofactor>
    <cofactor evidence="1">
        <name>Co(2+)</name>
        <dbReference type="ChEBI" id="CHEBI:48828"/>
    </cofactor>
    <text evidence="1">Binds 2 Zn(2+) or Co(2+) ions per subunit.</text>
</comment>
<comment type="pathway">
    <text evidence="1">Amino-acid biosynthesis; L-lysine biosynthesis via AAA pathway; L-lysine from L-alpha-aminoadipate (Thermus route): step 5/5.</text>
</comment>
<comment type="pathway">
    <text evidence="1">Amino-acid biosynthesis; L-arginine biosynthesis.</text>
</comment>
<comment type="subcellular location">
    <subcellularLocation>
        <location evidence="1">Cytoplasm</location>
    </subcellularLocation>
</comment>
<comment type="similarity">
    <text evidence="1">Belongs to the peptidase M20A family. LysK subfamily.</text>
</comment>
<dbReference type="EC" id="3.5.1.130" evidence="1"/>
<dbReference type="EC" id="3.5.1.132" evidence="1"/>
<dbReference type="EMBL" id="BA000023">
    <property type="protein sequence ID" value="BAB65146.1"/>
    <property type="molecule type" value="Genomic_DNA"/>
</dbReference>
<dbReference type="RefSeq" id="WP_010978128.1">
    <property type="nucleotide sequence ID" value="NC_003106.2"/>
</dbReference>
<dbReference type="SMR" id="Q976K1"/>
<dbReference type="STRING" id="273063.STK_01900"/>
<dbReference type="GeneID" id="1458074"/>
<dbReference type="KEGG" id="sto:STK_01900"/>
<dbReference type="PATRIC" id="fig|273063.9.peg.233"/>
<dbReference type="eggNOG" id="arCOG01107">
    <property type="taxonomic scope" value="Archaea"/>
</dbReference>
<dbReference type="OrthoDB" id="133929at2157"/>
<dbReference type="UniPathway" id="UPA00033">
    <property type="reaction ID" value="UER00039"/>
</dbReference>
<dbReference type="UniPathway" id="UPA00068"/>
<dbReference type="Proteomes" id="UP000001015">
    <property type="component" value="Chromosome"/>
</dbReference>
<dbReference type="GO" id="GO:0005737">
    <property type="term" value="C:cytoplasm"/>
    <property type="evidence" value="ECO:0007669"/>
    <property type="project" value="UniProtKB-SubCell"/>
</dbReference>
<dbReference type="GO" id="GO:0050897">
    <property type="term" value="F:cobalt ion binding"/>
    <property type="evidence" value="ECO:0007669"/>
    <property type="project" value="UniProtKB-UniRule"/>
</dbReference>
<dbReference type="GO" id="GO:0016811">
    <property type="term" value="F:hydrolase activity, acting on carbon-nitrogen (but not peptide) bonds, in linear amides"/>
    <property type="evidence" value="ECO:0007669"/>
    <property type="project" value="UniProtKB-UniRule"/>
</dbReference>
<dbReference type="GO" id="GO:0008270">
    <property type="term" value="F:zinc ion binding"/>
    <property type="evidence" value="ECO:0007669"/>
    <property type="project" value="UniProtKB-UniRule"/>
</dbReference>
<dbReference type="GO" id="GO:0042450">
    <property type="term" value="P:arginine biosynthetic process via ornithine"/>
    <property type="evidence" value="ECO:0007669"/>
    <property type="project" value="UniProtKB-UniRule"/>
</dbReference>
<dbReference type="GO" id="GO:0006526">
    <property type="term" value="P:L-arginine biosynthetic process"/>
    <property type="evidence" value="ECO:0007669"/>
    <property type="project" value="UniProtKB-UniPathway"/>
</dbReference>
<dbReference type="GO" id="GO:0019878">
    <property type="term" value="P:lysine biosynthetic process via aminoadipic acid"/>
    <property type="evidence" value="ECO:0007669"/>
    <property type="project" value="UniProtKB-UniRule"/>
</dbReference>
<dbReference type="CDD" id="cd05653">
    <property type="entry name" value="M20_ArgE_LysK"/>
    <property type="match status" value="1"/>
</dbReference>
<dbReference type="Gene3D" id="3.30.70.360">
    <property type="match status" value="1"/>
</dbReference>
<dbReference type="Gene3D" id="3.40.630.10">
    <property type="entry name" value="Zn peptidases"/>
    <property type="match status" value="1"/>
</dbReference>
<dbReference type="HAMAP" id="MF_01120">
    <property type="entry name" value="LysK"/>
    <property type="match status" value="1"/>
</dbReference>
<dbReference type="InterPro" id="IPR001261">
    <property type="entry name" value="ArgE/DapE_CS"/>
</dbReference>
<dbReference type="InterPro" id="IPR036264">
    <property type="entry name" value="Bact_exopeptidase_dim_dom"/>
</dbReference>
<dbReference type="InterPro" id="IPR010175">
    <property type="entry name" value="LysK"/>
</dbReference>
<dbReference type="InterPro" id="IPR002933">
    <property type="entry name" value="Peptidase_M20"/>
</dbReference>
<dbReference type="InterPro" id="IPR011650">
    <property type="entry name" value="Peptidase_M20_dimer"/>
</dbReference>
<dbReference type="InterPro" id="IPR050072">
    <property type="entry name" value="Peptidase_M20A"/>
</dbReference>
<dbReference type="NCBIfam" id="TIGR01902">
    <property type="entry name" value="dapE-lys-deAc"/>
    <property type="match status" value="1"/>
</dbReference>
<dbReference type="NCBIfam" id="NF001747">
    <property type="entry name" value="PRK00466.1"/>
    <property type="match status" value="1"/>
</dbReference>
<dbReference type="PANTHER" id="PTHR43808:SF28">
    <property type="entry name" value="[LYSW]-LYSINE_[LYSW]-ORNITHINE HYDROLASE"/>
    <property type="match status" value="1"/>
</dbReference>
<dbReference type="PANTHER" id="PTHR43808">
    <property type="entry name" value="ACETYLORNITHINE DEACETYLASE"/>
    <property type="match status" value="1"/>
</dbReference>
<dbReference type="Pfam" id="PF07687">
    <property type="entry name" value="M20_dimer"/>
    <property type="match status" value="1"/>
</dbReference>
<dbReference type="Pfam" id="PF01546">
    <property type="entry name" value="Peptidase_M20"/>
    <property type="match status" value="1"/>
</dbReference>
<dbReference type="SUPFAM" id="SSF55031">
    <property type="entry name" value="Bacterial exopeptidase dimerisation domain"/>
    <property type="match status" value="1"/>
</dbReference>
<dbReference type="SUPFAM" id="SSF53187">
    <property type="entry name" value="Zn-dependent exopeptidases"/>
    <property type="match status" value="1"/>
</dbReference>
<dbReference type="PROSITE" id="PS00758">
    <property type="entry name" value="ARGE_DAPE_CPG2_1"/>
    <property type="match status" value="1"/>
</dbReference>
<dbReference type="PROSITE" id="PS00759">
    <property type="entry name" value="ARGE_DAPE_CPG2_2"/>
    <property type="match status" value="1"/>
</dbReference>
<proteinExistence type="inferred from homology"/>
<gene>
    <name evidence="1" type="primary">lysK</name>
    <name type="ordered locus">STK_01900</name>
</gene>
<feature type="chain" id="PRO_0000185351" description="[LysW]-lysine/[LysW]-ornithine hydrolase">
    <location>
        <begin position="1"/>
        <end position="346"/>
    </location>
</feature>
<feature type="active site" evidence="1">
    <location>
        <position position="69"/>
    </location>
</feature>
<feature type="active site" description="Proton acceptor" evidence="1">
    <location>
        <position position="121"/>
    </location>
</feature>
<feature type="binding site" evidence="1">
    <location>
        <position position="67"/>
    </location>
    <ligand>
        <name>Zn(2+)</name>
        <dbReference type="ChEBI" id="CHEBI:29105"/>
        <label>1</label>
    </ligand>
</feature>
<feature type="binding site" evidence="1">
    <location>
        <position position="91"/>
    </location>
    <ligand>
        <name>Zn(2+)</name>
        <dbReference type="ChEBI" id="CHEBI:29105"/>
        <label>1</label>
    </ligand>
</feature>
<feature type="binding site" evidence="1">
    <location>
        <position position="91"/>
    </location>
    <ligand>
        <name>Zn(2+)</name>
        <dbReference type="ChEBI" id="CHEBI:29105"/>
        <label>2</label>
    </ligand>
</feature>
<feature type="binding site" evidence="1">
    <location>
        <position position="122"/>
    </location>
    <ligand>
        <name>Zn(2+)</name>
        <dbReference type="ChEBI" id="CHEBI:29105"/>
        <label>2</label>
    </ligand>
</feature>
<feature type="binding site" evidence="1">
    <location>
        <position position="145"/>
    </location>
    <ligand>
        <name>Zn(2+)</name>
        <dbReference type="ChEBI" id="CHEBI:29105"/>
        <label>1</label>
    </ligand>
</feature>
<feature type="binding site" evidence="1">
    <location>
        <position position="316"/>
    </location>
    <ligand>
        <name>Zn(2+)</name>
        <dbReference type="ChEBI" id="CHEBI:29105"/>
        <label>2</label>
    </ligand>
</feature>
<accession>Q976K1</accession>
<evidence type="ECO:0000255" key="1">
    <source>
        <dbReference type="HAMAP-Rule" id="MF_01120"/>
    </source>
</evidence>